<protein>
    <recommendedName>
        <fullName evidence="1">Ubiquinone/menaquinone biosynthesis C-methyltransferase UbiE</fullName>
        <ecNumber evidence="1">2.1.1.163</ecNumber>
        <ecNumber evidence="1">2.1.1.201</ecNumber>
    </recommendedName>
    <alternativeName>
        <fullName evidence="1">2-methoxy-6-polyprenyl-1,4-benzoquinol methylase</fullName>
    </alternativeName>
    <alternativeName>
        <fullName evidence="1">Demethylmenaquinone methyltransferase</fullName>
    </alternativeName>
</protein>
<feature type="chain" id="PRO_1000073676" description="Ubiquinone/menaquinone biosynthesis C-methyltransferase UbiE">
    <location>
        <begin position="1"/>
        <end position="235"/>
    </location>
</feature>
<feature type="binding site" evidence="1">
    <location>
        <position position="59"/>
    </location>
    <ligand>
        <name>S-adenosyl-L-methionine</name>
        <dbReference type="ChEBI" id="CHEBI:59789"/>
    </ligand>
</feature>
<feature type="binding site" evidence="1">
    <location>
        <position position="84"/>
    </location>
    <ligand>
        <name>S-adenosyl-L-methionine</name>
        <dbReference type="ChEBI" id="CHEBI:59789"/>
    </ligand>
</feature>
<feature type="binding site" evidence="1">
    <location>
        <position position="123"/>
    </location>
    <ligand>
        <name>S-adenosyl-L-methionine</name>
        <dbReference type="ChEBI" id="CHEBI:59789"/>
    </ligand>
</feature>
<accession>A8FKB3</accession>
<reference key="1">
    <citation type="journal article" date="2007" name="J. Bacteriol.">
        <title>The complete genome sequence of Campylobacter jejuni strain 81116 (NCTC11828).</title>
        <authorList>
            <person name="Pearson B.M."/>
            <person name="Gaskin D.J.H."/>
            <person name="Segers R.P.A.M."/>
            <person name="Wells J.M."/>
            <person name="Nuijten P.J.M."/>
            <person name="van Vliet A.H.M."/>
        </authorList>
    </citation>
    <scope>NUCLEOTIDE SEQUENCE [LARGE SCALE GENOMIC DNA]</scope>
    <source>
        <strain>81116 / NCTC 11828</strain>
    </source>
</reference>
<gene>
    <name evidence="1" type="primary">ubiE</name>
    <name type="ordered locus">C8J_0301</name>
</gene>
<keyword id="KW-0474">Menaquinone biosynthesis</keyword>
<keyword id="KW-0489">Methyltransferase</keyword>
<keyword id="KW-0949">S-adenosyl-L-methionine</keyword>
<keyword id="KW-0808">Transferase</keyword>
<keyword id="KW-0831">Ubiquinone biosynthesis</keyword>
<dbReference type="EC" id="2.1.1.163" evidence="1"/>
<dbReference type="EC" id="2.1.1.201" evidence="1"/>
<dbReference type="EMBL" id="CP000814">
    <property type="protein sequence ID" value="ABV51900.1"/>
    <property type="molecule type" value="Genomic_DNA"/>
</dbReference>
<dbReference type="RefSeq" id="WP_002854652.1">
    <property type="nucleotide sequence ID" value="NC_009839.1"/>
</dbReference>
<dbReference type="SMR" id="A8FKB3"/>
<dbReference type="KEGG" id="cju:C8J_0301"/>
<dbReference type="HOGENOM" id="CLU_037990_0_0_7"/>
<dbReference type="UniPathway" id="UPA00079">
    <property type="reaction ID" value="UER00169"/>
</dbReference>
<dbReference type="UniPathway" id="UPA00232"/>
<dbReference type="GO" id="GO:0008425">
    <property type="term" value="F:2-methoxy-6-polyprenyl-1,4-benzoquinol methyltransferase activity"/>
    <property type="evidence" value="ECO:0007669"/>
    <property type="project" value="UniProtKB-EC"/>
</dbReference>
<dbReference type="GO" id="GO:0043770">
    <property type="term" value="F:demethylmenaquinone methyltransferase activity"/>
    <property type="evidence" value="ECO:0007669"/>
    <property type="project" value="UniProtKB-UniRule"/>
</dbReference>
<dbReference type="GO" id="GO:0009234">
    <property type="term" value="P:menaquinone biosynthetic process"/>
    <property type="evidence" value="ECO:0007669"/>
    <property type="project" value="UniProtKB-UniRule"/>
</dbReference>
<dbReference type="GO" id="GO:0032259">
    <property type="term" value="P:methylation"/>
    <property type="evidence" value="ECO:0007669"/>
    <property type="project" value="UniProtKB-KW"/>
</dbReference>
<dbReference type="CDD" id="cd02440">
    <property type="entry name" value="AdoMet_MTases"/>
    <property type="match status" value="1"/>
</dbReference>
<dbReference type="Gene3D" id="3.40.50.150">
    <property type="entry name" value="Vaccinia Virus protein VP39"/>
    <property type="match status" value="1"/>
</dbReference>
<dbReference type="HAMAP" id="MF_01813">
    <property type="entry name" value="MenG_UbiE_methyltr"/>
    <property type="match status" value="1"/>
</dbReference>
<dbReference type="InterPro" id="IPR029063">
    <property type="entry name" value="SAM-dependent_MTases_sf"/>
</dbReference>
<dbReference type="InterPro" id="IPR004033">
    <property type="entry name" value="UbiE/COQ5_MeTrFase"/>
</dbReference>
<dbReference type="InterPro" id="IPR023576">
    <property type="entry name" value="UbiE/COQ5_MeTrFase_CS"/>
</dbReference>
<dbReference type="NCBIfam" id="TIGR01934">
    <property type="entry name" value="MenG_MenH_UbiE"/>
    <property type="match status" value="1"/>
</dbReference>
<dbReference type="NCBIfam" id="NF001244">
    <property type="entry name" value="PRK00216.1-5"/>
    <property type="match status" value="1"/>
</dbReference>
<dbReference type="PANTHER" id="PTHR43591:SF24">
    <property type="entry name" value="2-METHOXY-6-POLYPRENYL-1,4-BENZOQUINOL METHYLASE, MITOCHONDRIAL"/>
    <property type="match status" value="1"/>
</dbReference>
<dbReference type="PANTHER" id="PTHR43591">
    <property type="entry name" value="METHYLTRANSFERASE"/>
    <property type="match status" value="1"/>
</dbReference>
<dbReference type="Pfam" id="PF01209">
    <property type="entry name" value="Ubie_methyltran"/>
    <property type="match status" value="1"/>
</dbReference>
<dbReference type="SUPFAM" id="SSF53335">
    <property type="entry name" value="S-adenosyl-L-methionine-dependent methyltransferases"/>
    <property type="match status" value="1"/>
</dbReference>
<dbReference type="PROSITE" id="PS51608">
    <property type="entry name" value="SAM_MT_UBIE"/>
    <property type="match status" value="1"/>
</dbReference>
<dbReference type="PROSITE" id="PS01183">
    <property type="entry name" value="UBIE_1"/>
    <property type="match status" value="1"/>
</dbReference>
<dbReference type="PROSITE" id="PS01184">
    <property type="entry name" value="UBIE_2"/>
    <property type="match status" value="1"/>
</dbReference>
<comment type="function">
    <text evidence="1">Methyltransferase required for the conversion of demethylmenaquinol (DMKH2) to menaquinol (MKH2) and the conversion of 2-polyprenyl-6-methoxy-1,4-benzoquinol (DDMQH2) to 2-polyprenyl-3-methyl-6-methoxy-1,4-benzoquinol (DMQH2).</text>
</comment>
<comment type="catalytic activity">
    <reaction evidence="1">
        <text>a 2-demethylmenaquinol + S-adenosyl-L-methionine = a menaquinol + S-adenosyl-L-homocysteine + H(+)</text>
        <dbReference type="Rhea" id="RHEA:42640"/>
        <dbReference type="Rhea" id="RHEA-COMP:9539"/>
        <dbReference type="Rhea" id="RHEA-COMP:9563"/>
        <dbReference type="ChEBI" id="CHEBI:15378"/>
        <dbReference type="ChEBI" id="CHEBI:18151"/>
        <dbReference type="ChEBI" id="CHEBI:55437"/>
        <dbReference type="ChEBI" id="CHEBI:57856"/>
        <dbReference type="ChEBI" id="CHEBI:59789"/>
        <dbReference type="EC" id="2.1.1.163"/>
    </reaction>
</comment>
<comment type="catalytic activity">
    <reaction evidence="1">
        <text>a 2-methoxy-6-(all-trans-polyprenyl)benzene-1,4-diol + S-adenosyl-L-methionine = a 5-methoxy-2-methyl-3-(all-trans-polyprenyl)benzene-1,4-diol + S-adenosyl-L-homocysteine + H(+)</text>
        <dbReference type="Rhea" id="RHEA:28286"/>
        <dbReference type="Rhea" id="RHEA-COMP:10858"/>
        <dbReference type="Rhea" id="RHEA-COMP:10859"/>
        <dbReference type="ChEBI" id="CHEBI:15378"/>
        <dbReference type="ChEBI" id="CHEBI:57856"/>
        <dbReference type="ChEBI" id="CHEBI:59789"/>
        <dbReference type="ChEBI" id="CHEBI:84166"/>
        <dbReference type="ChEBI" id="CHEBI:84167"/>
        <dbReference type="EC" id="2.1.1.201"/>
    </reaction>
</comment>
<comment type="pathway">
    <text evidence="1">Quinol/quinone metabolism; menaquinone biosynthesis; menaquinol from 1,4-dihydroxy-2-naphthoate: step 2/2.</text>
</comment>
<comment type="pathway">
    <text evidence="1">Cofactor biosynthesis; ubiquinone biosynthesis.</text>
</comment>
<comment type="similarity">
    <text evidence="1">Belongs to the class I-like SAM-binding methyltransferase superfamily. MenG/UbiE family.</text>
</comment>
<name>UBIE_CAMJ8</name>
<organism>
    <name type="scientific">Campylobacter jejuni subsp. jejuni serotype O:6 (strain 81116 / NCTC 11828)</name>
    <dbReference type="NCBI Taxonomy" id="407148"/>
    <lineage>
        <taxon>Bacteria</taxon>
        <taxon>Pseudomonadati</taxon>
        <taxon>Campylobacterota</taxon>
        <taxon>Epsilonproteobacteria</taxon>
        <taxon>Campylobacterales</taxon>
        <taxon>Campylobacteraceae</taxon>
        <taxon>Campylobacter</taxon>
    </lineage>
</organism>
<sequence>MQKQEKIIEMFNQIAPTYDKANRILSFGADVVWRKKACQRVMSLYLKKDLKIADIACGTGDMIEIWQESALKMEKNILNIKGIDPSSGMLNVAKEKFPNVEFIEAGAQNLPLESQSLDILSISYGIRNVVERQKALSEFARVLQKGGILVVLEFTKREKGGFIAACRDFYLKNILPSIGGIISKNKSAYEYLPNSIEGFLSKEEFILELKNAGFEMLDYKSFSFGVSSMFIAKKL</sequence>
<evidence type="ECO:0000255" key="1">
    <source>
        <dbReference type="HAMAP-Rule" id="MF_01813"/>
    </source>
</evidence>
<proteinExistence type="inferred from homology"/>